<reference key="1">
    <citation type="journal article" date="1998" name="DNA Res.">
        <title>Complete sequence and gene organization of the genome of a hyper-thermophilic archaebacterium, Pyrococcus horikoshii OT3.</title>
        <authorList>
            <person name="Kawarabayasi Y."/>
            <person name="Sawada M."/>
            <person name="Horikawa H."/>
            <person name="Haikawa Y."/>
            <person name="Hino Y."/>
            <person name="Yamamoto S."/>
            <person name="Sekine M."/>
            <person name="Baba S."/>
            <person name="Kosugi H."/>
            <person name="Hosoyama A."/>
            <person name="Nagai Y."/>
            <person name="Sakai M."/>
            <person name="Ogura K."/>
            <person name="Otsuka R."/>
            <person name="Nakazawa H."/>
            <person name="Takamiya M."/>
            <person name="Ohfuku Y."/>
            <person name="Funahashi T."/>
            <person name="Tanaka T."/>
            <person name="Kudoh Y."/>
            <person name="Yamazaki J."/>
            <person name="Kushida N."/>
            <person name="Oguchi A."/>
            <person name="Aoki K."/>
            <person name="Yoshizawa T."/>
            <person name="Nakamura Y."/>
            <person name="Robb F.T."/>
            <person name="Horikoshi K."/>
            <person name="Masuchi Y."/>
            <person name="Shizuya H."/>
            <person name="Kikuchi H."/>
        </authorList>
    </citation>
    <scope>NUCLEOTIDE SEQUENCE [LARGE SCALE GENOMIC DNA]</scope>
    <source>
        <strain>ATCC 700860 / DSM 12428 / JCM 9974 / NBRC 100139 / OT-3</strain>
    </source>
</reference>
<proteinExistence type="inferred from homology"/>
<accession>O58984</accession>
<sequence length="198" mass="21690">MALITRKSFILVGVPPIMKSLIPIVLATLVILGMGCIGGGEEKMSLKVSSVFGNNEFIPAKYTCEGVDINPPLKIEGLSDNVKSLVIIVDDPDAPMGTFTHWIAWNIPPVTEIPEGIPKQGEVDKPIHIIQGRNDFGRIGYNGPCPPRGHGVHHYHFKVYALDTTLNLKPGASRKELEKAMEGHVIQYGELVGLYERK</sequence>
<comment type="similarity">
    <text evidence="1">Belongs to the UPF0098 family.</text>
</comment>
<evidence type="ECO:0000305" key="1"/>
<protein>
    <recommendedName>
        <fullName>UPF0098 protein PH1269</fullName>
    </recommendedName>
</protein>
<feature type="chain" id="PRO_0000137915" description="UPF0098 protein PH1269">
    <location>
        <begin position="1"/>
        <end position="198"/>
    </location>
</feature>
<name>Y1269_PYRHO</name>
<organism>
    <name type="scientific">Pyrococcus horikoshii (strain ATCC 700860 / DSM 12428 / JCM 9974 / NBRC 100139 / OT-3)</name>
    <dbReference type="NCBI Taxonomy" id="70601"/>
    <lineage>
        <taxon>Archaea</taxon>
        <taxon>Methanobacteriati</taxon>
        <taxon>Methanobacteriota</taxon>
        <taxon>Thermococci</taxon>
        <taxon>Thermococcales</taxon>
        <taxon>Thermococcaceae</taxon>
        <taxon>Pyrococcus</taxon>
    </lineage>
</organism>
<gene>
    <name type="ordered locus">PH1269</name>
</gene>
<dbReference type="EMBL" id="BA000001">
    <property type="protein sequence ID" value="BAA30372.1"/>
    <property type="molecule type" value="Genomic_DNA"/>
</dbReference>
<dbReference type="PIR" id="B71072">
    <property type="entry name" value="B71072"/>
</dbReference>
<dbReference type="SMR" id="O58984"/>
<dbReference type="STRING" id="70601.gene:9378234"/>
<dbReference type="EnsemblBacteria" id="BAA30372">
    <property type="protein sequence ID" value="BAA30372"/>
    <property type="gene ID" value="BAA30372"/>
</dbReference>
<dbReference type="KEGG" id="pho:PH1269"/>
<dbReference type="eggNOG" id="arCOG04702">
    <property type="taxonomic scope" value="Archaea"/>
</dbReference>
<dbReference type="Proteomes" id="UP000000752">
    <property type="component" value="Chromosome"/>
</dbReference>
<dbReference type="CDD" id="cd00865">
    <property type="entry name" value="PEBP_bact_arch"/>
    <property type="match status" value="1"/>
</dbReference>
<dbReference type="Gene3D" id="3.90.280.10">
    <property type="entry name" value="PEBP-like"/>
    <property type="match status" value="1"/>
</dbReference>
<dbReference type="InterPro" id="IPR008914">
    <property type="entry name" value="PEBP"/>
</dbReference>
<dbReference type="InterPro" id="IPR036610">
    <property type="entry name" value="PEBP-like_sf"/>
</dbReference>
<dbReference type="InterPro" id="IPR005247">
    <property type="entry name" value="YbhB_YbcL/LppC-like"/>
</dbReference>
<dbReference type="NCBIfam" id="TIGR00481">
    <property type="entry name" value="YbhB/YbcL family Raf kinase inhibitor-like protein"/>
    <property type="match status" value="1"/>
</dbReference>
<dbReference type="PANTHER" id="PTHR30289:SF1">
    <property type="entry name" value="PEBP (PHOSPHATIDYLETHANOLAMINE-BINDING PROTEIN) FAMILY PROTEIN"/>
    <property type="match status" value="1"/>
</dbReference>
<dbReference type="PANTHER" id="PTHR30289">
    <property type="entry name" value="UNCHARACTERIZED PROTEIN YBCL-RELATED"/>
    <property type="match status" value="1"/>
</dbReference>
<dbReference type="Pfam" id="PF01161">
    <property type="entry name" value="PBP"/>
    <property type="match status" value="1"/>
</dbReference>
<dbReference type="SUPFAM" id="SSF49777">
    <property type="entry name" value="PEBP-like"/>
    <property type="match status" value="1"/>
</dbReference>